<reference key="1">
    <citation type="journal article" date="2007" name="Science">
        <title>The Calyptogena magnifica chemoautotrophic symbiont genome.</title>
        <authorList>
            <person name="Newton I.L.G."/>
            <person name="Woyke T."/>
            <person name="Auchtung T.A."/>
            <person name="Dilly G.F."/>
            <person name="Dutton R.J."/>
            <person name="Fisher M.C."/>
            <person name="Fontanez K.M."/>
            <person name="Lau E."/>
            <person name="Stewart F.J."/>
            <person name="Richardson P.M."/>
            <person name="Barry K.W."/>
            <person name="Saunders E."/>
            <person name="Detter J.C."/>
            <person name="Wu D."/>
            <person name="Eisen J.A."/>
            <person name="Cavanaugh C.M."/>
        </authorList>
    </citation>
    <scope>NUCLEOTIDE SEQUENCE [LARGE SCALE GENOMIC DNA]</scope>
</reference>
<proteinExistence type="inferred from homology"/>
<evidence type="ECO:0000255" key="1">
    <source>
        <dbReference type="HAMAP-Rule" id="MF_00281"/>
    </source>
</evidence>
<sequence length="339" mass="38683">MVVIEAILDRAKIFIEKAQDLQDLEDLRTNVLGKKGELTTLLKGLGKLSKEQRPKMGEAINQIKVNIQVLLADKKNNLELIALEKRFLAEKIDVSLPGRHAEMGGLHPITITLNRIQSLFVKNSFEVVLGPEIEDNFYNFTALNIPEHHPARAMHDTFYFDKNTVLRTHTSPVQIRTLEKQKPPVRIIAPGRVYRRDLDITHTPMFHQVEGLIVDKHANFAQLKGLLIDFLRAYFEKEVLKVRFRPSYFPFTEPSAEADIECVICSGKGCRVCKKMGWLEVLGCGVVHPNVLSSVNIDSEVYTGLAFGIGIERLAMLRYGVNDLRLFFENDSRFLRQFR</sequence>
<name>SYFA_RUTMC</name>
<comment type="catalytic activity">
    <reaction evidence="1">
        <text>tRNA(Phe) + L-phenylalanine + ATP = L-phenylalanyl-tRNA(Phe) + AMP + diphosphate + H(+)</text>
        <dbReference type="Rhea" id="RHEA:19413"/>
        <dbReference type="Rhea" id="RHEA-COMP:9668"/>
        <dbReference type="Rhea" id="RHEA-COMP:9699"/>
        <dbReference type="ChEBI" id="CHEBI:15378"/>
        <dbReference type="ChEBI" id="CHEBI:30616"/>
        <dbReference type="ChEBI" id="CHEBI:33019"/>
        <dbReference type="ChEBI" id="CHEBI:58095"/>
        <dbReference type="ChEBI" id="CHEBI:78442"/>
        <dbReference type="ChEBI" id="CHEBI:78531"/>
        <dbReference type="ChEBI" id="CHEBI:456215"/>
        <dbReference type="EC" id="6.1.1.20"/>
    </reaction>
</comment>
<comment type="cofactor">
    <cofactor evidence="1">
        <name>Mg(2+)</name>
        <dbReference type="ChEBI" id="CHEBI:18420"/>
    </cofactor>
    <text evidence="1">Binds 2 magnesium ions per tetramer.</text>
</comment>
<comment type="subunit">
    <text evidence="1">Tetramer of two alpha and two beta subunits.</text>
</comment>
<comment type="subcellular location">
    <subcellularLocation>
        <location evidence="1">Cytoplasm</location>
    </subcellularLocation>
</comment>
<comment type="similarity">
    <text evidence="1">Belongs to the class-II aminoacyl-tRNA synthetase family. Phe-tRNA synthetase alpha subunit type 1 subfamily.</text>
</comment>
<accession>A1AWT1</accession>
<protein>
    <recommendedName>
        <fullName evidence="1">Phenylalanine--tRNA ligase alpha subunit</fullName>
        <ecNumber evidence="1">6.1.1.20</ecNumber>
    </recommendedName>
    <alternativeName>
        <fullName evidence="1">Phenylalanyl-tRNA synthetase alpha subunit</fullName>
        <shortName evidence="1">PheRS</shortName>
    </alternativeName>
</protein>
<dbReference type="EC" id="6.1.1.20" evidence="1"/>
<dbReference type="EMBL" id="CP000488">
    <property type="protein sequence ID" value="ABL02388.1"/>
    <property type="molecule type" value="Genomic_DNA"/>
</dbReference>
<dbReference type="RefSeq" id="WP_011738013.1">
    <property type="nucleotide sequence ID" value="NC_008610.1"/>
</dbReference>
<dbReference type="SMR" id="A1AWT1"/>
<dbReference type="STRING" id="413404.Rmag_0643"/>
<dbReference type="KEGG" id="rma:Rmag_0643"/>
<dbReference type="eggNOG" id="COG0016">
    <property type="taxonomic scope" value="Bacteria"/>
</dbReference>
<dbReference type="HOGENOM" id="CLU_025086_0_1_6"/>
<dbReference type="OrthoDB" id="9800719at2"/>
<dbReference type="Proteomes" id="UP000002587">
    <property type="component" value="Chromosome"/>
</dbReference>
<dbReference type="GO" id="GO:0005737">
    <property type="term" value="C:cytoplasm"/>
    <property type="evidence" value="ECO:0007669"/>
    <property type="project" value="UniProtKB-SubCell"/>
</dbReference>
<dbReference type="GO" id="GO:0005524">
    <property type="term" value="F:ATP binding"/>
    <property type="evidence" value="ECO:0007669"/>
    <property type="project" value="UniProtKB-UniRule"/>
</dbReference>
<dbReference type="GO" id="GO:0000287">
    <property type="term" value="F:magnesium ion binding"/>
    <property type="evidence" value="ECO:0007669"/>
    <property type="project" value="UniProtKB-UniRule"/>
</dbReference>
<dbReference type="GO" id="GO:0004826">
    <property type="term" value="F:phenylalanine-tRNA ligase activity"/>
    <property type="evidence" value="ECO:0007669"/>
    <property type="project" value="UniProtKB-UniRule"/>
</dbReference>
<dbReference type="GO" id="GO:0000049">
    <property type="term" value="F:tRNA binding"/>
    <property type="evidence" value="ECO:0007669"/>
    <property type="project" value="InterPro"/>
</dbReference>
<dbReference type="GO" id="GO:0006432">
    <property type="term" value="P:phenylalanyl-tRNA aminoacylation"/>
    <property type="evidence" value="ECO:0007669"/>
    <property type="project" value="UniProtKB-UniRule"/>
</dbReference>
<dbReference type="CDD" id="cd00496">
    <property type="entry name" value="PheRS_alpha_core"/>
    <property type="match status" value="1"/>
</dbReference>
<dbReference type="FunFam" id="3.30.930.10:FF:000003">
    <property type="entry name" value="Phenylalanine--tRNA ligase alpha subunit"/>
    <property type="match status" value="1"/>
</dbReference>
<dbReference type="Gene3D" id="3.30.930.10">
    <property type="entry name" value="Bira Bifunctional Protein, Domain 2"/>
    <property type="match status" value="1"/>
</dbReference>
<dbReference type="HAMAP" id="MF_00281">
    <property type="entry name" value="Phe_tRNA_synth_alpha1"/>
    <property type="match status" value="1"/>
</dbReference>
<dbReference type="InterPro" id="IPR006195">
    <property type="entry name" value="aa-tRNA-synth_II"/>
</dbReference>
<dbReference type="InterPro" id="IPR045864">
    <property type="entry name" value="aa-tRNA-synth_II/BPL/LPL"/>
</dbReference>
<dbReference type="InterPro" id="IPR004529">
    <property type="entry name" value="Phe-tRNA-synth_IIc_asu"/>
</dbReference>
<dbReference type="InterPro" id="IPR004188">
    <property type="entry name" value="Phe-tRNA_ligase_II_N"/>
</dbReference>
<dbReference type="InterPro" id="IPR022911">
    <property type="entry name" value="Phe_tRNA_ligase_alpha1_bac"/>
</dbReference>
<dbReference type="InterPro" id="IPR002319">
    <property type="entry name" value="Phenylalanyl-tRNA_Synthase"/>
</dbReference>
<dbReference type="InterPro" id="IPR010978">
    <property type="entry name" value="tRNA-bd_arm"/>
</dbReference>
<dbReference type="NCBIfam" id="TIGR00468">
    <property type="entry name" value="pheS"/>
    <property type="match status" value="1"/>
</dbReference>
<dbReference type="PANTHER" id="PTHR11538:SF41">
    <property type="entry name" value="PHENYLALANINE--TRNA LIGASE, MITOCHONDRIAL"/>
    <property type="match status" value="1"/>
</dbReference>
<dbReference type="PANTHER" id="PTHR11538">
    <property type="entry name" value="PHENYLALANYL-TRNA SYNTHETASE"/>
    <property type="match status" value="1"/>
</dbReference>
<dbReference type="Pfam" id="PF02912">
    <property type="entry name" value="Phe_tRNA-synt_N"/>
    <property type="match status" value="1"/>
</dbReference>
<dbReference type="Pfam" id="PF01409">
    <property type="entry name" value="tRNA-synt_2d"/>
    <property type="match status" value="1"/>
</dbReference>
<dbReference type="SUPFAM" id="SSF55681">
    <property type="entry name" value="Class II aaRS and biotin synthetases"/>
    <property type="match status" value="1"/>
</dbReference>
<dbReference type="SUPFAM" id="SSF46589">
    <property type="entry name" value="tRNA-binding arm"/>
    <property type="match status" value="1"/>
</dbReference>
<dbReference type="PROSITE" id="PS50862">
    <property type="entry name" value="AA_TRNA_LIGASE_II"/>
    <property type="match status" value="1"/>
</dbReference>
<keyword id="KW-0030">Aminoacyl-tRNA synthetase</keyword>
<keyword id="KW-0067">ATP-binding</keyword>
<keyword id="KW-0963">Cytoplasm</keyword>
<keyword id="KW-0436">Ligase</keyword>
<keyword id="KW-0460">Magnesium</keyword>
<keyword id="KW-0479">Metal-binding</keyword>
<keyword id="KW-0547">Nucleotide-binding</keyword>
<keyword id="KW-0648">Protein biosynthesis</keyword>
<feature type="chain" id="PRO_1000006890" description="Phenylalanine--tRNA ligase alpha subunit">
    <location>
        <begin position="1"/>
        <end position="339"/>
    </location>
</feature>
<feature type="binding site" evidence="1">
    <location>
        <position position="253"/>
    </location>
    <ligand>
        <name>Mg(2+)</name>
        <dbReference type="ChEBI" id="CHEBI:18420"/>
        <note>shared with beta subunit</note>
    </ligand>
</feature>
<organism>
    <name type="scientific">Ruthia magnifica subsp. Calyptogena magnifica</name>
    <dbReference type="NCBI Taxonomy" id="413404"/>
    <lineage>
        <taxon>Bacteria</taxon>
        <taxon>Pseudomonadati</taxon>
        <taxon>Pseudomonadota</taxon>
        <taxon>Gammaproteobacteria</taxon>
        <taxon>Candidatus Pseudothioglobaceae</taxon>
        <taxon>Candidatus Ruthturnera</taxon>
    </lineage>
</organism>
<gene>
    <name evidence="1" type="primary">pheS</name>
    <name type="ordered locus">Rmag_0643</name>
</gene>